<proteinExistence type="inferred from homology"/>
<feature type="chain" id="PRO_0000368726" description="ATP synthase subunit b 1">
    <location>
        <begin position="1"/>
        <end position="253"/>
    </location>
</feature>
<feature type="transmembrane region" description="Helical" evidence="1">
    <location>
        <begin position="5"/>
        <end position="27"/>
    </location>
</feature>
<protein>
    <recommendedName>
        <fullName evidence="1">ATP synthase subunit b 1</fullName>
    </recommendedName>
    <alternativeName>
        <fullName evidence="1">ATP synthase F(0) sector subunit b 1</fullName>
    </alternativeName>
    <alternativeName>
        <fullName evidence="1">ATPase subunit I 1</fullName>
    </alternativeName>
    <alternativeName>
        <fullName evidence="1">F-type ATPase subunit b 1</fullName>
        <shortName evidence="1">F-ATPase subunit b 1</shortName>
    </alternativeName>
</protein>
<sequence>MAIDGWTVALQAVNFLILVLLLRHFLYRPVLAMIDRRKAEATRLLDDAALRVEAAKAERQKAETLRADLEAQADALLADSRARAGKELEELRTRARREADGILAEGRKALAEERRAAEADLRGKAAGLAVEIAGRLLAAATPGARVEPFLDRVCTRLTALPEPERQVLAGQAADGGIRIVTAVPLDEAGRAHCRDRAHTLLGPDIALTFADDPELLAGVELHFAHTVIRDSWRDLLGRIGLELDGHDDAHRIA</sequence>
<gene>
    <name evidence="1" type="primary">atpF1</name>
    <name type="ordered locus">RC1_0367</name>
</gene>
<accession>B6IQS5</accession>
<reference key="1">
    <citation type="submission" date="2007-03" db="EMBL/GenBank/DDBJ databases">
        <title>Genome sequence of Rhodospirillum centenum.</title>
        <authorList>
            <person name="Touchman J.W."/>
            <person name="Bauer C."/>
            <person name="Blankenship R.E."/>
        </authorList>
    </citation>
    <scope>NUCLEOTIDE SEQUENCE [LARGE SCALE GENOMIC DNA]</scope>
    <source>
        <strain>ATCC 51521 / SW</strain>
    </source>
</reference>
<name>ATPF1_RHOCS</name>
<evidence type="ECO:0000255" key="1">
    <source>
        <dbReference type="HAMAP-Rule" id="MF_01398"/>
    </source>
</evidence>
<comment type="function">
    <text evidence="1">F(1)F(0) ATP synthase produces ATP from ADP in the presence of a proton or sodium gradient. F-type ATPases consist of two structural domains, F(1) containing the extramembraneous catalytic core and F(0) containing the membrane proton channel, linked together by a central stalk and a peripheral stalk. During catalysis, ATP synthesis in the catalytic domain of F(1) is coupled via a rotary mechanism of the central stalk subunits to proton translocation.</text>
</comment>
<comment type="function">
    <text evidence="1">Component of the F(0) channel, it forms part of the peripheral stalk, linking F(1) to F(0).</text>
</comment>
<comment type="subunit">
    <text evidence="1">F-type ATPases have 2 components, F(1) - the catalytic core - and F(0) - the membrane proton channel. F(1) has five subunits: alpha(3), beta(3), gamma(1), delta(1), epsilon(1). F(0) has three main subunits: a(1), b(2) and c(10-14). The alpha and beta chains form an alternating ring which encloses part of the gamma chain. F(1) is attached to F(0) by a central stalk formed by the gamma and epsilon chains, while a peripheral stalk is formed by the delta and b chains.</text>
</comment>
<comment type="subcellular location">
    <subcellularLocation>
        <location evidence="1">Cell inner membrane</location>
        <topology evidence="1">Single-pass membrane protein</topology>
    </subcellularLocation>
</comment>
<comment type="similarity">
    <text evidence="1">Belongs to the ATPase B chain family.</text>
</comment>
<organism>
    <name type="scientific">Rhodospirillum centenum (strain ATCC 51521 / SW)</name>
    <dbReference type="NCBI Taxonomy" id="414684"/>
    <lineage>
        <taxon>Bacteria</taxon>
        <taxon>Pseudomonadati</taxon>
        <taxon>Pseudomonadota</taxon>
        <taxon>Alphaproteobacteria</taxon>
        <taxon>Rhodospirillales</taxon>
        <taxon>Rhodospirillaceae</taxon>
        <taxon>Rhodospirillum</taxon>
    </lineage>
</organism>
<dbReference type="EMBL" id="CP000613">
    <property type="protein sequence ID" value="ACI97811.1"/>
    <property type="molecule type" value="Genomic_DNA"/>
</dbReference>
<dbReference type="RefSeq" id="WP_012565603.1">
    <property type="nucleotide sequence ID" value="NC_011420.2"/>
</dbReference>
<dbReference type="SMR" id="B6IQS5"/>
<dbReference type="STRING" id="414684.RC1_0367"/>
<dbReference type="KEGG" id="rce:RC1_0367"/>
<dbReference type="eggNOG" id="COG0711">
    <property type="taxonomic scope" value="Bacteria"/>
</dbReference>
<dbReference type="HOGENOM" id="CLU_070737_0_0_5"/>
<dbReference type="OrthoDB" id="466272at2"/>
<dbReference type="Proteomes" id="UP000001591">
    <property type="component" value="Chromosome"/>
</dbReference>
<dbReference type="GO" id="GO:0005886">
    <property type="term" value="C:plasma membrane"/>
    <property type="evidence" value="ECO:0007669"/>
    <property type="project" value="UniProtKB-SubCell"/>
</dbReference>
<dbReference type="GO" id="GO:0045259">
    <property type="term" value="C:proton-transporting ATP synthase complex"/>
    <property type="evidence" value="ECO:0007669"/>
    <property type="project" value="UniProtKB-KW"/>
</dbReference>
<dbReference type="GO" id="GO:0046933">
    <property type="term" value="F:proton-transporting ATP synthase activity, rotational mechanism"/>
    <property type="evidence" value="ECO:0007669"/>
    <property type="project" value="UniProtKB-UniRule"/>
</dbReference>
<dbReference type="GO" id="GO:0046961">
    <property type="term" value="F:proton-transporting ATPase activity, rotational mechanism"/>
    <property type="evidence" value="ECO:0007669"/>
    <property type="project" value="TreeGrafter"/>
</dbReference>
<dbReference type="CDD" id="cd06503">
    <property type="entry name" value="ATP-synt_Fo_b"/>
    <property type="match status" value="1"/>
</dbReference>
<dbReference type="HAMAP" id="MF_01398">
    <property type="entry name" value="ATP_synth_b_bprime"/>
    <property type="match status" value="1"/>
</dbReference>
<dbReference type="InterPro" id="IPR002146">
    <property type="entry name" value="ATP_synth_b/b'su_bac/chlpt"/>
</dbReference>
<dbReference type="InterPro" id="IPR050059">
    <property type="entry name" value="ATP_synthase_B_chain"/>
</dbReference>
<dbReference type="PANTHER" id="PTHR33445">
    <property type="entry name" value="ATP SYNTHASE SUBUNIT B', CHLOROPLASTIC"/>
    <property type="match status" value="1"/>
</dbReference>
<dbReference type="PANTHER" id="PTHR33445:SF2">
    <property type="entry name" value="ATP SYNTHASE SUBUNIT B', CHLOROPLASTIC"/>
    <property type="match status" value="1"/>
</dbReference>
<dbReference type="Pfam" id="PF00430">
    <property type="entry name" value="ATP-synt_B"/>
    <property type="match status" value="1"/>
</dbReference>
<keyword id="KW-0066">ATP synthesis</keyword>
<keyword id="KW-0997">Cell inner membrane</keyword>
<keyword id="KW-1003">Cell membrane</keyword>
<keyword id="KW-0138">CF(0)</keyword>
<keyword id="KW-0375">Hydrogen ion transport</keyword>
<keyword id="KW-0406">Ion transport</keyword>
<keyword id="KW-0472">Membrane</keyword>
<keyword id="KW-1185">Reference proteome</keyword>
<keyword id="KW-0812">Transmembrane</keyword>
<keyword id="KW-1133">Transmembrane helix</keyword>
<keyword id="KW-0813">Transport</keyword>